<protein>
    <recommendedName>
        <fullName>Uncharacterized protein PA2024</fullName>
    </recommendedName>
</protein>
<organism>
    <name type="scientific">Pseudomonas aeruginosa (strain ATCC 15692 / DSM 22644 / CIP 104116 / JCM 14847 / LMG 12228 / 1C / PRS 101 / PAO1)</name>
    <dbReference type="NCBI Taxonomy" id="208964"/>
    <lineage>
        <taxon>Bacteria</taxon>
        <taxon>Pseudomonadati</taxon>
        <taxon>Pseudomonadota</taxon>
        <taxon>Gammaproteobacteria</taxon>
        <taxon>Pseudomonadales</taxon>
        <taxon>Pseudomonadaceae</taxon>
        <taxon>Pseudomonas</taxon>
    </lineage>
</organism>
<sequence length="140" mass="15373">MSPTLTHLALHVPDLDACIAFYETFCGMRVIHRRPGKGSQIVWMAEPGQEQRFIFVIMPGGQPRNLASDDYSHFGFALSSRAAVDDLARRAEAAGCLVWAPRDEPYPVGYYCGLRDPAGNYVEFSYGQPLGPGSEALPIP</sequence>
<dbReference type="EMBL" id="AE004091">
    <property type="protein sequence ID" value="AAG05412.1"/>
    <property type="molecule type" value="Genomic_DNA"/>
</dbReference>
<dbReference type="EMBL" id="X54201">
    <property type="protein sequence ID" value="CAA38121.1"/>
    <property type="molecule type" value="Genomic_DNA"/>
</dbReference>
<dbReference type="PIR" id="E83391">
    <property type="entry name" value="E83391"/>
</dbReference>
<dbReference type="PIR" id="S15235">
    <property type="entry name" value="S15235"/>
</dbReference>
<dbReference type="RefSeq" id="NP_250714.1">
    <property type="nucleotide sequence ID" value="NC_002516.2"/>
</dbReference>
<dbReference type="RefSeq" id="WP_003100368.1">
    <property type="nucleotide sequence ID" value="NZ_QZGE01000026.1"/>
</dbReference>
<dbReference type="SMR" id="P23205"/>
<dbReference type="STRING" id="208964.PA2024"/>
<dbReference type="PaxDb" id="208964-PA2024"/>
<dbReference type="GeneID" id="878003"/>
<dbReference type="KEGG" id="pae:PA2024"/>
<dbReference type="PATRIC" id="fig|208964.12.peg.2109"/>
<dbReference type="PseudoCAP" id="PA2024"/>
<dbReference type="HOGENOM" id="CLU_146025_0_0_6"/>
<dbReference type="InParanoid" id="P23205"/>
<dbReference type="OrthoDB" id="9789841at2"/>
<dbReference type="PhylomeDB" id="P23205"/>
<dbReference type="BioCyc" id="PAER208964:G1FZ6-2062-MONOMER"/>
<dbReference type="Proteomes" id="UP000002438">
    <property type="component" value="Chromosome"/>
</dbReference>
<dbReference type="GO" id="GO:0046686">
    <property type="term" value="P:response to cadmium ion"/>
    <property type="evidence" value="ECO:0000318"/>
    <property type="project" value="GO_Central"/>
</dbReference>
<dbReference type="CDD" id="cd06587">
    <property type="entry name" value="VOC"/>
    <property type="match status" value="1"/>
</dbReference>
<dbReference type="Gene3D" id="3.10.180.10">
    <property type="entry name" value="2,3-Dihydroxybiphenyl 1,2-Dioxygenase, domain 1"/>
    <property type="match status" value="1"/>
</dbReference>
<dbReference type="InterPro" id="IPR052393">
    <property type="entry name" value="Cadmium-induced_rsp"/>
</dbReference>
<dbReference type="InterPro" id="IPR029068">
    <property type="entry name" value="Glyas_Bleomycin-R_OHBP_Dase"/>
</dbReference>
<dbReference type="InterPro" id="IPR004360">
    <property type="entry name" value="Glyas_Fos-R_dOase_dom"/>
</dbReference>
<dbReference type="InterPro" id="IPR037523">
    <property type="entry name" value="VOC"/>
</dbReference>
<dbReference type="PANTHER" id="PTHR41294">
    <property type="entry name" value="CADMIUM-INDUCED PROTEIN CADI"/>
    <property type="match status" value="1"/>
</dbReference>
<dbReference type="PANTHER" id="PTHR41294:SF1">
    <property type="entry name" value="CADMIUM-INDUCED PROTEIN CADI"/>
    <property type="match status" value="1"/>
</dbReference>
<dbReference type="Pfam" id="PF00903">
    <property type="entry name" value="Glyoxalase"/>
    <property type="match status" value="1"/>
</dbReference>
<dbReference type="SUPFAM" id="SSF54593">
    <property type="entry name" value="Glyoxalase/Bleomycin resistance protein/Dihydroxybiphenyl dioxygenase"/>
    <property type="match status" value="1"/>
</dbReference>
<dbReference type="PROSITE" id="PS51819">
    <property type="entry name" value="VOC"/>
    <property type="match status" value="1"/>
</dbReference>
<gene>
    <name type="ordered locus">PA2024</name>
</gene>
<accession>P23205</accession>
<accession>Q9I290</accession>
<evidence type="ECO:0000255" key="1">
    <source>
        <dbReference type="PROSITE-ProRule" id="PRU01163"/>
    </source>
</evidence>
<keyword id="KW-1185">Reference proteome</keyword>
<reference key="1">
    <citation type="journal article" date="2000" name="Nature">
        <title>Complete genome sequence of Pseudomonas aeruginosa PAO1, an opportunistic pathogen.</title>
        <authorList>
            <person name="Stover C.K."/>
            <person name="Pham X.-Q.T."/>
            <person name="Erwin A.L."/>
            <person name="Mizoguchi S.D."/>
            <person name="Warrener P."/>
            <person name="Hickey M.J."/>
            <person name="Brinkman F.S.L."/>
            <person name="Hufnagle W.O."/>
            <person name="Kowalik D.J."/>
            <person name="Lagrou M."/>
            <person name="Garber R.L."/>
            <person name="Goltry L."/>
            <person name="Tolentino E."/>
            <person name="Westbrock-Wadman S."/>
            <person name="Yuan Y."/>
            <person name="Brody L.L."/>
            <person name="Coulter S.N."/>
            <person name="Folger K.R."/>
            <person name="Kas A."/>
            <person name="Larbig K."/>
            <person name="Lim R.M."/>
            <person name="Smith K.A."/>
            <person name="Spencer D.H."/>
            <person name="Wong G.K.-S."/>
            <person name="Wu Z."/>
            <person name="Paulsen I.T."/>
            <person name="Reizer J."/>
            <person name="Saier M.H. Jr."/>
            <person name="Hancock R.E.W."/>
            <person name="Lory S."/>
            <person name="Olson M.V."/>
        </authorList>
    </citation>
    <scope>NUCLEOTIDE SEQUENCE [LARGE SCALE GENOMIC DNA]</scope>
    <source>
        <strain>ATCC 15692 / DSM 22644 / CIP 104116 / JCM 14847 / LMG 12228 / 1C / PRS 101 / PAO1</strain>
    </source>
</reference>
<reference key="2">
    <citation type="journal article" date="1991" name="Mol. Microbiol.">
        <title>Molecular characterization of the gor gene encoding glutathione reductase from Pseudomonas aeruginosa: determinants of substrate specificity among pyridine nucleotide-disulphide oxidoreductases.</title>
        <authorList>
            <person name="Perry A.C.F."/>
            <person name="Ni Bhriain N."/>
            <person name="Brown N.L."/>
            <person name="Rouch D.A."/>
        </authorList>
    </citation>
    <scope>NUCLEOTIDE SEQUENCE [GENOMIC DNA] OF 1-28</scope>
    <source>
        <strain>PAO8</strain>
    </source>
</reference>
<proteinExistence type="predicted"/>
<name>Y2024_PSEAE</name>
<feature type="chain" id="PRO_0000206252" description="Uncharacterized protein PA2024">
    <location>
        <begin position="1"/>
        <end position="140"/>
    </location>
</feature>
<feature type="domain" description="VOC" evidence="1">
    <location>
        <begin position="4"/>
        <end position="127"/>
    </location>
</feature>